<feature type="chain" id="PRO_1000205624" description="Large ribosomal subunit protein uL29">
    <location>
        <begin position="1"/>
        <end position="66"/>
    </location>
</feature>
<proteinExistence type="inferred from homology"/>
<sequence length="66" mass="7574">MKINKYVEDLKAKSAAELNEELVAAKKELFNLRFQNATNQLDNTSRIKEVRKNIARIQTVIAQKNA</sequence>
<reference key="1">
    <citation type="journal article" date="2009" name="Proc. Natl. Acad. Sci. U.S.A.">
        <title>Characterizing a model human gut microbiota composed of members of its two dominant bacterial phyla.</title>
        <authorList>
            <person name="Mahowald M.A."/>
            <person name="Rey F.E."/>
            <person name="Seedorf H."/>
            <person name="Turnbaugh P.J."/>
            <person name="Fulton R.S."/>
            <person name="Wollam A."/>
            <person name="Shah N."/>
            <person name="Wang C."/>
            <person name="Magrini V."/>
            <person name="Wilson R.K."/>
            <person name="Cantarel B.L."/>
            <person name="Coutinho P.M."/>
            <person name="Henrissat B."/>
            <person name="Crock L.W."/>
            <person name="Russell A."/>
            <person name="Verberkmoes N.C."/>
            <person name="Hettich R.L."/>
            <person name="Gordon J.I."/>
        </authorList>
    </citation>
    <scope>NUCLEOTIDE SEQUENCE [LARGE SCALE GENOMIC DNA]</scope>
    <source>
        <strain>ATCC 27750 / DSM 3376 / VPI C15-48 / C15-B4</strain>
    </source>
</reference>
<evidence type="ECO:0000255" key="1">
    <source>
        <dbReference type="HAMAP-Rule" id="MF_00374"/>
    </source>
</evidence>
<evidence type="ECO:0000305" key="2"/>
<protein>
    <recommendedName>
        <fullName evidence="1">Large ribosomal subunit protein uL29</fullName>
    </recommendedName>
    <alternativeName>
        <fullName evidence="2">50S ribosomal protein L29</fullName>
    </alternativeName>
</protein>
<accession>C4Z2T8</accession>
<organism>
    <name type="scientific">Lachnospira eligens (strain ATCC 27750 / DSM 3376 / VPI C15-48 / C15-B4)</name>
    <name type="common">Eubacterium eligens</name>
    <dbReference type="NCBI Taxonomy" id="515620"/>
    <lineage>
        <taxon>Bacteria</taxon>
        <taxon>Bacillati</taxon>
        <taxon>Bacillota</taxon>
        <taxon>Clostridia</taxon>
        <taxon>Lachnospirales</taxon>
        <taxon>Lachnospiraceae</taxon>
        <taxon>Lachnospira</taxon>
    </lineage>
</organism>
<comment type="similarity">
    <text evidence="1">Belongs to the universal ribosomal protein uL29 family.</text>
</comment>
<gene>
    <name evidence="1" type="primary">rpmC</name>
    <name type="ordered locus">EUBELI_00307</name>
</gene>
<name>RL29_LACE2</name>
<dbReference type="EMBL" id="CP001104">
    <property type="protein sequence ID" value="ACR71343.1"/>
    <property type="molecule type" value="Genomic_DNA"/>
</dbReference>
<dbReference type="RefSeq" id="WP_012738580.1">
    <property type="nucleotide sequence ID" value="NC_012778.1"/>
</dbReference>
<dbReference type="SMR" id="C4Z2T8"/>
<dbReference type="STRING" id="515620.EUBELI_00307"/>
<dbReference type="GeneID" id="41355080"/>
<dbReference type="KEGG" id="eel:EUBELI_00307"/>
<dbReference type="eggNOG" id="COG0255">
    <property type="taxonomic scope" value="Bacteria"/>
</dbReference>
<dbReference type="HOGENOM" id="CLU_158491_1_0_9"/>
<dbReference type="Proteomes" id="UP000001476">
    <property type="component" value="Chromosome"/>
</dbReference>
<dbReference type="GO" id="GO:0022625">
    <property type="term" value="C:cytosolic large ribosomal subunit"/>
    <property type="evidence" value="ECO:0007669"/>
    <property type="project" value="TreeGrafter"/>
</dbReference>
<dbReference type="GO" id="GO:0003735">
    <property type="term" value="F:structural constituent of ribosome"/>
    <property type="evidence" value="ECO:0007669"/>
    <property type="project" value="InterPro"/>
</dbReference>
<dbReference type="GO" id="GO:0006412">
    <property type="term" value="P:translation"/>
    <property type="evidence" value="ECO:0007669"/>
    <property type="project" value="UniProtKB-UniRule"/>
</dbReference>
<dbReference type="CDD" id="cd00427">
    <property type="entry name" value="Ribosomal_L29_HIP"/>
    <property type="match status" value="1"/>
</dbReference>
<dbReference type="FunFam" id="1.10.287.310:FF:000001">
    <property type="entry name" value="50S ribosomal protein L29"/>
    <property type="match status" value="1"/>
</dbReference>
<dbReference type="Gene3D" id="1.10.287.310">
    <property type="match status" value="1"/>
</dbReference>
<dbReference type="HAMAP" id="MF_00374">
    <property type="entry name" value="Ribosomal_uL29"/>
    <property type="match status" value="1"/>
</dbReference>
<dbReference type="InterPro" id="IPR050063">
    <property type="entry name" value="Ribosomal_protein_uL29"/>
</dbReference>
<dbReference type="InterPro" id="IPR001854">
    <property type="entry name" value="Ribosomal_uL29"/>
</dbReference>
<dbReference type="InterPro" id="IPR018254">
    <property type="entry name" value="Ribosomal_uL29_CS"/>
</dbReference>
<dbReference type="InterPro" id="IPR036049">
    <property type="entry name" value="Ribosomal_uL29_sf"/>
</dbReference>
<dbReference type="NCBIfam" id="TIGR00012">
    <property type="entry name" value="L29"/>
    <property type="match status" value="1"/>
</dbReference>
<dbReference type="PANTHER" id="PTHR10916">
    <property type="entry name" value="60S RIBOSOMAL PROTEIN L35/50S RIBOSOMAL PROTEIN L29"/>
    <property type="match status" value="1"/>
</dbReference>
<dbReference type="PANTHER" id="PTHR10916:SF0">
    <property type="entry name" value="LARGE RIBOSOMAL SUBUNIT PROTEIN UL29C"/>
    <property type="match status" value="1"/>
</dbReference>
<dbReference type="Pfam" id="PF00831">
    <property type="entry name" value="Ribosomal_L29"/>
    <property type="match status" value="1"/>
</dbReference>
<dbReference type="SUPFAM" id="SSF46561">
    <property type="entry name" value="Ribosomal protein L29 (L29p)"/>
    <property type="match status" value="1"/>
</dbReference>
<dbReference type="PROSITE" id="PS00579">
    <property type="entry name" value="RIBOSOMAL_L29"/>
    <property type="match status" value="1"/>
</dbReference>
<keyword id="KW-1185">Reference proteome</keyword>
<keyword id="KW-0687">Ribonucleoprotein</keyword>
<keyword id="KW-0689">Ribosomal protein</keyword>